<proteinExistence type="inferred from homology"/>
<protein>
    <recommendedName>
        <fullName evidence="1">L-fucose isomerase</fullName>
        <ecNumber evidence="1">5.3.1.25</ecNumber>
    </recommendedName>
    <alternativeName>
        <fullName evidence="1">6-deoxy-L-galactose isomerase</fullName>
    </alternativeName>
    <alternativeName>
        <fullName>FucIase</fullName>
    </alternativeName>
</protein>
<sequence length="591" mass="65006">MKKISLPKIGIRPVIDGRRMGVRESLEEQTMNMAKATAALLTEKLRHACGATVECVISDTCIAGMAEAAACEEKFSSQNVGLTITVTPCWCYGSETIDMDPTRPKAIWGFNGTERPGAVYLAAALAAHSQKGIPAFSIYGHDVQDADDTSIPADVEEKLLRFARAGLAVASMKGKSYLSLGGVSMGIAGSIVDHNFFESWLGMKVQAVDMTELRRRIDQKIYDEAELEMALAWADKNFRYGEDENNKQYQRNAEQSRAVLRESLLMAMCIRDMMQGNSKLADIGRVEESLGYNAIAAGFQGQRHWTDQYPNGDTAEAILNSSFDWNGVRKPFVVATENDSLNGVAMLMGHQLTGTAQVFADVRTYWSPEAIERVTGHKLDGLAEHGIIHLINSGSAALDGSCKQRDSEGNPTMKPHWEISQQEADACLAATEWCPAIHEYFRGGGYSSRFLTEGGVPFTMTRVNIIKGLGPVLQIAEGWSVELPKDVHDILNKRTNSTWPTTWFAPRLTGKGPFTDVYSVMANWGANHGVLTIGHVGADFITLASMLRIPVCMHNVEETKVYRPSAWAAHGMDIEGQDYRACQNYGPLYKR</sequence>
<dbReference type="EC" id="5.3.1.25" evidence="1"/>
<dbReference type="EMBL" id="AE014075">
    <property type="protein sequence ID" value="AAN81818.1"/>
    <property type="molecule type" value="Genomic_DNA"/>
</dbReference>
<dbReference type="RefSeq" id="WP_000724179.1">
    <property type="nucleotide sequence ID" value="NZ_CP051263.1"/>
</dbReference>
<dbReference type="SMR" id="Q8FEE7"/>
<dbReference type="STRING" id="199310.c3371"/>
<dbReference type="KEGG" id="ecc:c3371"/>
<dbReference type="eggNOG" id="COG2407">
    <property type="taxonomic scope" value="Bacteria"/>
</dbReference>
<dbReference type="HOGENOM" id="CLU_033326_1_0_6"/>
<dbReference type="BioCyc" id="ECOL199310:C3371-MONOMER"/>
<dbReference type="UniPathway" id="UPA00563">
    <property type="reaction ID" value="UER00624"/>
</dbReference>
<dbReference type="Proteomes" id="UP000001410">
    <property type="component" value="Chromosome"/>
</dbReference>
<dbReference type="GO" id="GO:0005737">
    <property type="term" value="C:cytoplasm"/>
    <property type="evidence" value="ECO:0007669"/>
    <property type="project" value="UniProtKB-SubCell"/>
</dbReference>
<dbReference type="GO" id="GO:0008790">
    <property type="term" value="F:arabinose isomerase activity"/>
    <property type="evidence" value="ECO:0007669"/>
    <property type="project" value="TreeGrafter"/>
</dbReference>
<dbReference type="GO" id="GO:0008736">
    <property type="term" value="F:L-fucose isomerase activity"/>
    <property type="evidence" value="ECO:0007669"/>
    <property type="project" value="UniProtKB-UniRule"/>
</dbReference>
<dbReference type="GO" id="GO:0030145">
    <property type="term" value="F:manganese ion binding"/>
    <property type="evidence" value="ECO:0007669"/>
    <property type="project" value="UniProtKB-UniRule"/>
</dbReference>
<dbReference type="GO" id="GO:0019571">
    <property type="term" value="P:D-arabinose catabolic process"/>
    <property type="evidence" value="ECO:0007669"/>
    <property type="project" value="TreeGrafter"/>
</dbReference>
<dbReference type="GO" id="GO:0042355">
    <property type="term" value="P:L-fucose catabolic process"/>
    <property type="evidence" value="ECO:0007669"/>
    <property type="project" value="UniProtKB-UniRule"/>
</dbReference>
<dbReference type="CDD" id="cd03556">
    <property type="entry name" value="L-fucose_isomerase"/>
    <property type="match status" value="1"/>
</dbReference>
<dbReference type="FunFam" id="3.20.14.10:FF:000001">
    <property type="entry name" value="L-fucose isomerase"/>
    <property type="match status" value="1"/>
</dbReference>
<dbReference type="FunFam" id="3.40.275.10:FF:000001">
    <property type="entry name" value="L-fucose isomerase"/>
    <property type="match status" value="1"/>
</dbReference>
<dbReference type="FunFam" id="3.40.50.1070:FF:000001">
    <property type="entry name" value="L-fucose isomerase"/>
    <property type="match status" value="1"/>
</dbReference>
<dbReference type="Gene3D" id="3.40.50.1070">
    <property type="match status" value="1"/>
</dbReference>
<dbReference type="Gene3D" id="3.40.275.10">
    <property type="entry name" value="L-fucose Isomerase, Chain A, domain 2"/>
    <property type="match status" value="1"/>
</dbReference>
<dbReference type="Gene3D" id="3.20.14.10">
    <property type="entry name" value="L-fucose/L-arabinose isomerase, C-terminal"/>
    <property type="match status" value="1"/>
</dbReference>
<dbReference type="HAMAP" id="MF_01254">
    <property type="entry name" value="Fucose_iso"/>
    <property type="match status" value="1"/>
</dbReference>
<dbReference type="InterPro" id="IPR004216">
    <property type="entry name" value="Fuc/Ara_isomerase_C"/>
</dbReference>
<dbReference type="InterPro" id="IPR038393">
    <property type="entry name" value="Fuc_iso_dom3_sf"/>
</dbReference>
<dbReference type="InterPro" id="IPR015888">
    <property type="entry name" value="Fuc_isomerase_C"/>
</dbReference>
<dbReference type="InterPro" id="IPR038391">
    <property type="entry name" value="Fucose_iso_dom1_sf"/>
</dbReference>
<dbReference type="InterPro" id="IPR012888">
    <property type="entry name" value="Fucose_iso_N1"/>
</dbReference>
<dbReference type="InterPro" id="IPR005763">
    <property type="entry name" value="Fucose_isomerase"/>
</dbReference>
<dbReference type="InterPro" id="IPR038392">
    <property type="entry name" value="Fucose_isomerase_dom2_sf"/>
</dbReference>
<dbReference type="InterPro" id="IPR009015">
    <property type="entry name" value="Fucose_isomerase_N/cen_sf"/>
</dbReference>
<dbReference type="InterPro" id="IPR012889">
    <property type="entry name" value="Fucose_isomerase_N2"/>
</dbReference>
<dbReference type="NCBIfam" id="TIGR01089">
    <property type="entry name" value="fucI"/>
    <property type="match status" value="1"/>
</dbReference>
<dbReference type="NCBIfam" id="NF008220">
    <property type="entry name" value="PRK10991.1"/>
    <property type="match status" value="1"/>
</dbReference>
<dbReference type="PANTHER" id="PTHR37840">
    <property type="entry name" value="L-FUCOSE ISOMERASE"/>
    <property type="match status" value="1"/>
</dbReference>
<dbReference type="PANTHER" id="PTHR37840:SF1">
    <property type="entry name" value="L-FUCOSE ISOMERASE"/>
    <property type="match status" value="1"/>
</dbReference>
<dbReference type="Pfam" id="PF02952">
    <property type="entry name" value="Fucose_iso_C"/>
    <property type="match status" value="1"/>
</dbReference>
<dbReference type="Pfam" id="PF07881">
    <property type="entry name" value="Fucose_iso_N1"/>
    <property type="match status" value="1"/>
</dbReference>
<dbReference type="Pfam" id="PF07882">
    <property type="entry name" value="Fucose_iso_N2"/>
    <property type="match status" value="1"/>
</dbReference>
<dbReference type="SUPFAM" id="SSF50443">
    <property type="entry name" value="FucI/AraA C-terminal domain-like"/>
    <property type="match status" value="1"/>
</dbReference>
<dbReference type="SUPFAM" id="SSF53743">
    <property type="entry name" value="FucI/AraA N-terminal and middle domains"/>
    <property type="match status" value="1"/>
</dbReference>
<name>FUCI_ECOL6</name>
<keyword id="KW-0119">Carbohydrate metabolism</keyword>
<keyword id="KW-0963">Cytoplasm</keyword>
<keyword id="KW-0294">Fucose metabolism</keyword>
<keyword id="KW-0413">Isomerase</keyword>
<keyword id="KW-0464">Manganese</keyword>
<keyword id="KW-0479">Metal-binding</keyword>
<keyword id="KW-1185">Reference proteome</keyword>
<feature type="chain" id="PRO_0000204147" description="L-fucose isomerase">
    <location>
        <begin position="1"/>
        <end position="591"/>
    </location>
</feature>
<feature type="active site" description="Proton acceptor" evidence="1">
    <location>
        <position position="337"/>
    </location>
</feature>
<feature type="active site" description="Proton acceptor" evidence="1">
    <location>
        <position position="361"/>
    </location>
</feature>
<feature type="binding site" evidence="1">
    <location>
        <position position="337"/>
    </location>
    <ligand>
        <name>Mn(2+)</name>
        <dbReference type="ChEBI" id="CHEBI:29035"/>
    </ligand>
</feature>
<feature type="binding site" evidence="1">
    <location>
        <position position="361"/>
    </location>
    <ligand>
        <name>Mn(2+)</name>
        <dbReference type="ChEBI" id="CHEBI:29035"/>
    </ligand>
</feature>
<feature type="binding site" evidence="1">
    <location>
        <position position="528"/>
    </location>
    <ligand>
        <name>Mn(2+)</name>
        <dbReference type="ChEBI" id="CHEBI:29035"/>
    </ligand>
</feature>
<accession>Q8FEE7</accession>
<organism>
    <name type="scientific">Escherichia coli O6:H1 (strain CFT073 / ATCC 700928 / UPEC)</name>
    <dbReference type="NCBI Taxonomy" id="199310"/>
    <lineage>
        <taxon>Bacteria</taxon>
        <taxon>Pseudomonadati</taxon>
        <taxon>Pseudomonadota</taxon>
        <taxon>Gammaproteobacteria</taxon>
        <taxon>Enterobacterales</taxon>
        <taxon>Enterobacteriaceae</taxon>
        <taxon>Escherichia</taxon>
    </lineage>
</organism>
<comment type="function">
    <text evidence="1">Converts the aldose L-fucose into the corresponding ketose L-fuculose.</text>
</comment>
<comment type="catalytic activity">
    <reaction evidence="1">
        <text>L-fucose = L-fuculose</text>
        <dbReference type="Rhea" id="RHEA:17233"/>
        <dbReference type="ChEBI" id="CHEBI:2181"/>
        <dbReference type="ChEBI" id="CHEBI:17617"/>
        <dbReference type="EC" id="5.3.1.25"/>
    </reaction>
</comment>
<comment type="cofactor">
    <cofactor evidence="1">
        <name>Mn(2+)</name>
        <dbReference type="ChEBI" id="CHEBI:29035"/>
    </cofactor>
</comment>
<comment type="pathway">
    <text evidence="1">Carbohydrate degradation; L-fucose degradation; L-lactaldehyde and glycerone phosphate from L-fucose: step 1/3.</text>
</comment>
<comment type="subunit">
    <text evidence="1">Homohexamer.</text>
</comment>
<comment type="subcellular location">
    <subcellularLocation>
        <location evidence="1">Cytoplasm</location>
    </subcellularLocation>
</comment>
<comment type="similarity">
    <text evidence="1">Belongs to the L-fucose isomerase family.</text>
</comment>
<evidence type="ECO:0000255" key="1">
    <source>
        <dbReference type="HAMAP-Rule" id="MF_01254"/>
    </source>
</evidence>
<reference key="1">
    <citation type="journal article" date="2002" name="Proc. Natl. Acad. Sci. U.S.A.">
        <title>Extensive mosaic structure revealed by the complete genome sequence of uropathogenic Escherichia coli.</title>
        <authorList>
            <person name="Welch R.A."/>
            <person name="Burland V."/>
            <person name="Plunkett G. III"/>
            <person name="Redford P."/>
            <person name="Roesch P."/>
            <person name="Rasko D."/>
            <person name="Buckles E.L."/>
            <person name="Liou S.-R."/>
            <person name="Boutin A."/>
            <person name="Hackett J."/>
            <person name="Stroud D."/>
            <person name="Mayhew G.F."/>
            <person name="Rose D.J."/>
            <person name="Zhou S."/>
            <person name="Schwartz D.C."/>
            <person name="Perna N.T."/>
            <person name="Mobley H.L.T."/>
            <person name="Donnenberg M.S."/>
            <person name="Blattner F.R."/>
        </authorList>
    </citation>
    <scope>NUCLEOTIDE SEQUENCE [LARGE SCALE GENOMIC DNA]</scope>
    <source>
        <strain>CFT073 / ATCC 700928 / UPEC</strain>
    </source>
</reference>
<gene>
    <name evidence="1" type="primary">fucI</name>
    <name type="ordered locus">c3371</name>
</gene>